<dbReference type="EMBL" id="AM180252">
    <property type="protein sequence ID" value="CAJ55025.1"/>
    <property type="molecule type" value="Genomic_DNA"/>
</dbReference>
<dbReference type="RefSeq" id="WP_011527054.1">
    <property type="nucleotide sequence ID" value="NC_008011.1"/>
</dbReference>
<dbReference type="SMR" id="Q1MPQ2"/>
<dbReference type="STRING" id="363253.LI0971"/>
<dbReference type="KEGG" id="lip:LI0971"/>
<dbReference type="eggNOG" id="COG0094">
    <property type="taxonomic scope" value="Bacteria"/>
</dbReference>
<dbReference type="HOGENOM" id="CLU_061015_2_1_7"/>
<dbReference type="OrthoDB" id="9806626at2"/>
<dbReference type="Proteomes" id="UP000002430">
    <property type="component" value="Chromosome"/>
</dbReference>
<dbReference type="GO" id="GO:1990904">
    <property type="term" value="C:ribonucleoprotein complex"/>
    <property type="evidence" value="ECO:0007669"/>
    <property type="project" value="UniProtKB-KW"/>
</dbReference>
<dbReference type="GO" id="GO:0005840">
    <property type="term" value="C:ribosome"/>
    <property type="evidence" value="ECO:0007669"/>
    <property type="project" value="UniProtKB-KW"/>
</dbReference>
<dbReference type="GO" id="GO:0019843">
    <property type="term" value="F:rRNA binding"/>
    <property type="evidence" value="ECO:0007669"/>
    <property type="project" value="UniProtKB-UniRule"/>
</dbReference>
<dbReference type="GO" id="GO:0003735">
    <property type="term" value="F:structural constituent of ribosome"/>
    <property type="evidence" value="ECO:0007669"/>
    <property type="project" value="InterPro"/>
</dbReference>
<dbReference type="GO" id="GO:0000049">
    <property type="term" value="F:tRNA binding"/>
    <property type="evidence" value="ECO:0007669"/>
    <property type="project" value="UniProtKB-UniRule"/>
</dbReference>
<dbReference type="GO" id="GO:0006412">
    <property type="term" value="P:translation"/>
    <property type="evidence" value="ECO:0007669"/>
    <property type="project" value="UniProtKB-UniRule"/>
</dbReference>
<dbReference type="FunFam" id="3.30.1440.10:FF:000001">
    <property type="entry name" value="50S ribosomal protein L5"/>
    <property type="match status" value="1"/>
</dbReference>
<dbReference type="Gene3D" id="3.30.1440.10">
    <property type="match status" value="1"/>
</dbReference>
<dbReference type="HAMAP" id="MF_01333_B">
    <property type="entry name" value="Ribosomal_uL5_B"/>
    <property type="match status" value="1"/>
</dbReference>
<dbReference type="InterPro" id="IPR002132">
    <property type="entry name" value="Ribosomal_uL5"/>
</dbReference>
<dbReference type="InterPro" id="IPR020930">
    <property type="entry name" value="Ribosomal_uL5_bac-type"/>
</dbReference>
<dbReference type="InterPro" id="IPR031309">
    <property type="entry name" value="Ribosomal_uL5_C"/>
</dbReference>
<dbReference type="InterPro" id="IPR020929">
    <property type="entry name" value="Ribosomal_uL5_CS"/>
</dbReference>
<dbReference type="InterPro" id="IPR022803">
    <property type="entry name" value="Ribosomal_uL5_dom_sf"/>
</dbReference>
<dbReference type="InterPro" id="IPR031310">
    <property type="entry name" value="Ribosomal_uL5_N"/>
</dbReference>
<dbReference type="NCBIfam" id="NF000585">
    <property type="entry name" value="PRK00010.1"/>
    <property type="match status" value="1"/>
</dbReference>
<dbReference type="PANTHER" id="PTHR11994">
    <property type="entry name" value="60S RIBOSOMAL PROTEIN L11-RELATED"/>
    <property type="match status" value="1"/>
</dbReference>
<dbReference type="Pfam" id="PF00281">
    <property type="entry name" value="Ribosomal_L5"/>
    <property type="match status" value="1"/>
</dbReference>
<dbReference type="Pfam" id="PF00673">
    <property type="entry name" value="Ribosomal_L5_C"/>
    <property type="match status" value="1"/>
</dbReference>
<dbReference type="PIRSF" id="PIRSF002161">
    <property type="entry name" value="Ribosomal_L5"/>
    <property type="match status" value="1"/>
</dbReference>
<dbReference type="SUPFAM" id="SSF55282">
    <property type="entry name" value="RL5-like"/>
    <property type="match status" value="1"/>
</dbReference>
<dbReference type="PROSITE" id="PS00358">
    <property type="entry name" value="RIBOSOMAL_L5"/>
    <property type="match status" value="1"/>
</dbReference>
<sequence>MTRLEKFYQEKVVPALQKEFLYKSIMQVPTIEKISLNIGLGVASQSNKIMEEAISELSLIAGQKAVITRAKKSIASFKLREGMPIGCRVTLRKERMWDFLDKLMNFALPRVRDFRGVSENGFDGHGNFTLGIKEHSIFPELEIDRIENTKGMNITIVTSAVLDSEGKVLLDLLGMPFKK</sequence>
<evidence type="ECO:0000255" key="1">
    <source>
        <dbReference type="HAMAP-Rule" id="MF_01333"/>
    </source>
</evidence>
<evidence type="ECO:0000305" key="2"/>
<reference key="1">
    <citation type="submission" date="2005-11" db="EMBL/GenBank/DDBJ databases">
        <title>The complete genome sequence of Lawsonia intracellularis: the causative agent of proliferative enteropathy.</title>
        <authorList>
            <person name="Kaur K."/>
            <person name="Zhang Q."/>
            <person name="Beckler D."/>
            <person name="Munir S."/>
            <person name="Li L."/>
            <person name="Kinsley K."/>
            <person name="Herron L."/>
            <person name="Peterson A."/>
            <person name="May B."/>
            <person name="Singh S."/>
            <person name="Gebhart C."/>
            <person name="Kapur V."/>
        </authorList>
    </citation>
    <scope>NUCLEOTIDE SEQUENCE [LARGE SCALE GENOMIC DNA]</scope>
    <source>
        <strain>PHE/MN1-00</strain>
    </source>
</reference>
<keyword id="KW-1185">Reference proteome</keyword>
<keyword id="KW-0687">Ribonucleoprotein</keyword>
<keyword id="KW-0689">Ribosomal protein</keyword>
<keyword id="KW-0694">RNA-binding</keyword>
<keyword id="KW-0699">rRNA-binding</keyword>
<keyword id="KW-0820">tRNA-binding</keyword>
<name>RL5_LAWIP</name>
<accession>Q1MPQ2</accession>
<proteinExistence type="inferred from homology"/>
<protein>
    <recommendedName>
        <fullName evidence="1">Large ribosomal subunit protein uL5</fullName>
    </recommendedName>
    <alternativeName>
        <fullName evidence="2">50S ribosomal protein L5</fullName>
    </alternativeName>
</protein>
<feature type="chain" id="PRO_1000052760" description="Large ribosomal subunit protein uL5">
    <location>
        <begin position="1"/>
        <end position="179"/>
    </location>
</feature>
<comment type="function">
    <text evidence="1">This is one of the proteins that bind and probably mediate the attachment of the 5S RNA into the large ribosomal subunit, where it forms part of the central protuberance. In the 70S ribosome it contacts protein S13 of the 30S subunit (bridge B1b), connecting the 2 subunits; this bridge is implicated in subunit movement. Contacts the P site tRNA; the 5S rRNA and some of its associated proteins might help stabilize positioning of ribosome-bound tRNAs.</text>
</comment>
<comment type="subunit">
    <text evidence="1">Part of the 50S ribosomal subunit; part of the 5S rRNA/L5/L18/L25 subcomplex. Contacts the 5S rRNA and the P site tRNA. Forms a bridge to the 30S subunit in the 70S ribosome.</text>
</comment>
<comment type="similarity">
    <text evidence="1">Belongs to the universal ribosomal protein uL5 family.</text>
</comment>
<gene>
    <name evidence="1" type="primary">rplE</name>
    <name type="ordered locus">LI0971</name>
</gene>
<organism>
    <name type="scientific">Lawsonia intracellularis (strain PHE/MN1-00)</name>
    <dbReference type="NCBI Taxonomy" id="363253"/>
    <lineage>
        <taxon>Bacteria</taxon>
        <taxon>Pseudomonadati</taxon>
        <taxon>Thermodesulfobacteriota</taxon>
        <taxon>Desulfovibrionia</taxon>
        <taxon>Desulfovibrionales</taxon>
        <taxon>Desulfovibrionaceae</taxon>
        <taxon>Lawsonia</taxon>
    </lineage>
</organism>